<accession>P0A9N7</accession>
<accession>P09374</accession>
<proteinExistence type="inferred from homology"/>
<reference key="1">
    <citation type="journal article" date="2002" name="Nucleic Acids Res.">
        <title>Genome sequence of Shigella flexneri 2a: insights into pathogenicity through comparison with genomes of Escherichia coli K12 and O157.</title>
        <authorList>
            <person name="Jin Q."/>
            <person name="Yuan Z."/>
            <person name="Xu J."/>
            <person name="Wang Y."/>
            <person name="Shen Y."/>
            <person name="Lu W."/>
            <person name="Wang J."/>
            <person name="Liu H."/>
            <person name="Yang J."/>
            <person name="Yang F."/>
            <person name="Zhang X."/>
            <person name="Zhang J."/>
            <person name="Yang G."/>
            <person name="Wu H."/>
            <person name="Qu D."/>
            <person name="Dong J."/>
            <person name="Sun L."/>
            <person name="Xue Y."/>
            <person name="Zhao A."/>
            <person name="Gao Y."/>
            <person name="Zhu J."/>
            <person name="Kan B."/>
            <person name="Ding K."/>
            <person name="Chen S."/>
            <person name="Cheng H."/>
            <person name="Yao Z."/>
            <person name="He B."/>
            <person name="Chen R."/>
            <person name="Ma D."/>
            <person name="Qiang B."/>
            <person name="Wen Y."/>
            <person name="Hou Y."/>
            <person name="Yu J."/>
        </authorList>
    </citation>
    <scope>NUCLEOTIDE SEQUENCE [LARGE SCALE GENOMIC DNA]</scope>
    <source>
        <strain>301 / Serotype 2a</strain>
    </source>
</reference>
<reference key="2">
    <citation type="journal article" date="2003" name="Infect. Immun.">
        <title>Complete genome sequence and comparative genomics of Shigella flexneri serotype 2a strain 2457T.</title>
        <authorList>
            <person name="Wei J."/>
            <person name="Goldberg M.B."/>
            <person name="Burland V."/>
            <person name="Venkatesan M.M."/>
            <person name="Deng W."/>
            <person name="Fournier G."/>
            <person name="Mayhew G.F."/>
            <person name="Plunkett G. III"/>
            <person name="Rose D.J."/>
            <person name="Darling A."/>
            <person name="Mau B."/>
            <person name="Perna N.T."/>
            <person name="Payne S.M."/>
            <person name="Runyen-Janecky L.J."/>
            <person name="Zhou S."/>
            <person name="Schwartz D.C."/>
            <person name="Blattner F.R."/>
        </authorList>
    </citation>
    <scope>NUCLEOTIDE SEQUENCE [LARGE SCALE GENOMIC DNA]</scope>
    <source>
        <strain>ATCC 700930 / 2457T / Serotype 2a</strain>
    </source>
</reference>
<evidence type="ECO:0000250" key="1"/>
<evidence type="ECO:0000250" key="2">
    <source>
        <dbReference type="UniProtKB" id="P0A9N4"/>
    </source>
</evidence>
<evidence type="ECO:0000255" key="3">
    <source>
        <dbReference type="PROSITE-ProRule" id="PRU01266"/>
    </source>
</evidence>
<evidence type="ECO:0000305" key="4"/>
<gene>
    <name type="primary">pflA</name>
    <name type="ordered locus">SF0897</name>
    <name type="ordered locus">S0961</name>
</gene>
<keyword id="KW-0004">4Fe-4S</keyword>
<keyword id="KW-0119">Carbohydrate metabolism</keyword>
<keyword id="KW-0963">Cytoplasm</keyword>
<keyword id="KW-0313">Glucose metabolism</keyword>
<keyword id="KW-0408">Iron</keyword>
<keyword id="KW-0411">Iron-sulfur</keyword>
<keyword id="KW-0479">Metal-binding</keyword>
<keyword id="KW-0560">Oxidoreductase</keyword>
<keyword id="KW-1185">Reference proteome</keyword>
<keyword id="KW-0949">S-adenosyl-L-methionine</keyword>
<organism>
    <name type="scientific">Shigella flexneri</name>
    <dbReference type="NCBI Taxonomy" id="623"/>
    <lineage>
        <taxon>Bacteria</taxon>
        <taxon>Pseudomonadati</taxon>
        <taxon>Pseudomonadota</taxon>
        <taxon>Gammaproteobacteria</taxon>
        <taxon>Enterobacterales</taxon>
        <taxon>Enterobacteriaceae</taxon>
        <taxon>Shigella</taxon>
    </lineage>
</organism>
<protein>
    <recommendedName>
        <fullName>Pyruvate formate-lyase 1-activating enzyme</fullName>
        <ecNumber>1.97.1.4</ecNumber>
    </recommendedName>
    <alternativeName>
        <fullName>Formate-C-acetyltransferase-activating enzyme 1</fullName>
    </alternativeName>
    <alternativeName>
        <fullName>PFL-activating enzyme 1</fullName>
    </alternativeName>
</protein>
<feature type="initiator methionine" description="Removed" evidence="1">
    <location>
        <position position="1"/>
    </location>
</feature>
<feature type="chain" id="PRO_0000200526" description="Pyruvate formate-lyase 1-activating enzyme">
    <location>
        <begin position="2"/>
        <end position="246"/>
    </location>
</feature>
<feature type="domain" description="Radical SAM core" evidence="3">
    <location>
        <begin position="16"/>
        <end position="239"/>
    </location>
</feature>
<feature type="binding site" evidence="2">
    <location>
        <position position="30"/>
    </location>
    <ligand>
        <name>[4Fe-4S] cluster</name>
        <dbReference type="ChEBI" id="CHEBI:49883"/>
        <note>4Fe-4S-S-AdoMet</note>
    </ligand>
</feature>
<feature type="binding site" evidence="2">
    <location>
        <position position="34"/>
    </location>
    <ligand>
        <name>[4Fe-4S] cluster</name>
        <dbReference type="ChEBI" id="CHEBI:49883"/>
        <note>4Fe-4S-S-AdoMet</note>
    </ligand>
</feature>
<feature type="binding site" evidence="2">
    <location>
        <begin position="36"/>
        <end position="38"/>
    </location>
    <ligand>
        <name>S-adenosyl-L-methionine</name>
        <dbReference type="ChEBI" id="CHEBI:59789"/>
    </ligand>
</feature>
<feature type="binding site" evidence="2">
    <location>
        <position position="37"/>
    </location>
    <ligand>
        <name>[4Fe-4S] cluster</name>
        <dbReference type="ChEBI" id="CHEBI:49883"/>
        <note>4Fe-4S-S-AdoMet</note>
    </ligand>
</feature>
<feature type="binding site" evidence="2">
    <location>
        <position position="79"/>
    </location>
    <ligand>
        <name>S-adenosyl-L-methionine</name>
        <dbReference type="ChEBI" id="CHEBI:59789"/>
    </ligand>
</feature>
<feature type="binding site" evidence="2">
    <location>
        <begin position="130"/>
        <end position="132"/>
    </location>
    <ligand>
        <name>S-adenosyl-L-methionine</name>
        <dbReference type="ChEBI" id="CHEBI:59789"/>
    </ligand>
</feature>
<feature type="binding site" evidence="2">
    <location>
        <position position="203"/>
    </location>
    <ligand>
        <name>S-adenosyl-L-methionine</name>
        <dbReference type="ChEBI" id="CHEBI:59789"/>
    </ligand>
</feature>
<sequence>MSVIGRIHSFESCGTVDGPGIRFITFFQGCLMRCLYCHNRDTWDTHGGKEVTVEDLMKEVVTYRHFMNASGGGVTASGGEAILQAEFVRDWFRACKKEGIHTCLDTNGFVRRYDPVIDELLEVTDLVMLDLKQMNDEIHQNLVGVSNHRTLEFAKYLANKNVKVWIRYVVVPGWSDDDDSAHRLGEFTRDMGNVEKIELLPYHELGKHKWVAMGEEYKLDGVKPPKKETMERVKGILEQYGHKVMF</sequence>
<dbReference type="EC" id="1.97.1.4"/>
<dbReference type="EMBL" id="AE005674">
    <property type="protein sequence ID" value="AAN42527.2"/>
    <property type="molecule type" value="Genomic_DNA"/>
</dbReference>
<dbReference type="EMBL" id="AE014073">
    <property type="protein sequence ID" value="AAP16414.1"/>
    <property type="molecule type" value="Genomic_DNA"/>
</dbReference>
<dbReference type="RefSeq" id="NP_706820.2">
    <property type="nucleotide sequence ID" value="NC_004337.2"/>
</dbReference>
<dbReference type="RefSeq" id="WP_000111043.1">
    <property type="nucleotide sequence ID" value="NZ_WPGW01000209.1"/>
</dbReference>
<dbReference type="SMR" id="P0A9N7"/>
<dbReference type="STRING" id="198214.SF0897"/>
<dbReference type="PaxDb" id="198214-SF0897"/>
<dbReference type="GeneID" id="1023839"/>
<dbReference type="GeneID" id="93776516"/>
<dbReference type="KEGG" id="sfl:SF0897"/>
<dbReference type="KEGG" id="sfx:S0961"/>
<dbReference type="PATRIC" id="fig|198214.7.peg.1044"/>
<dbReference type="HOGENOM" id="CLU_058969_1_0_6"/>
<dbReference type="Proteomes" id="UP000001006">
    <property type="component" value="Chromosome"/>
</dbReference>
<dbReference type="Proteomes" id="UP000002673">
    <property type="component" value="Chromosome"/>
</dbReference>
<dbReference type="GO" id="GO:0005737">
    <property type="term" value="C:cytoplasm"/>
    <property type="evidence" value="ECO:0007669"/>
    <property type="project" value="UniProtKB-SubCell"/>
</dbReference>
<dbReference type="GO" id="GO:0051539">
    <property type="term" value="F:4 iron, 4 sulfur cluster binding"/>
    <property type="evidence" value="ECO:0007669"/>
    <property type="project" value="UniProtKB-KW"/>
</dbReference>
<dbReference type="GO" id="GO:0043365">
    <property type="term" value="F:[formate-C-acetyltransferase]-activating enzyme activity"/>
    <property type="evidence" value="ECO:0007669"/>
    <property type="project" value="UniProtKB-EC"/>
</dbReference>
<dbReference type="GO" id="GO:0046872">
    <property type="term" value="F:metal ion binding"/>
    <property type="evidence" value="ECO:0007669"/>
    <property type="project" value="UniProtKB-KW"/>
</dbReference>
<dbReference type="GO" id="GO:0006006">
    <property type="term" value="P:glucose metabolic process"/>
    <property type="evidence" value="ECO:0007669"/>
    <property type="project" value="UniProtKB-KW"/>
</dbReference>
<dbReference type="CDD" id="cd01335">
    <property type="entry name" value="Radical_SAM"/>
    <property type="match status" value="1"/>
</dbReference>
<dbReference type="FunFam" id="3.20.20.70:FF:000050">
    <property type="entry name" value="Pyruvate formate-lyase-activating enzyme"/>
    <property type="match status" value="1"/>
</dbReference>
<dbReference type="Gene3D" id="3.20.20.70">
    <property type="entry name" value="Aldolase class I"/>
    <property type="match status" value="1"/>
</dbReference>
<dbReference type="InterPro" id="IPR013785">
    <property type="entry name" value="Aldolase_TIM"/>
</dbReference>
<dbReference type="InterPro" id="IPR034457">
    <property type="entry name" value="Organic_radical-activating"/>
</dbReference>
<dbReference type="InterPro" id="IPR012839">
    <property type="entry name" value="Organic_radical_activase"/>
</dbReference>
<dbReference type="InterPro" id="IPR012838">
    <property type="entry name" value="PFL1_activating"/>
</dbReference>
<dbReference type="InterPro" id="IPR034465">
    <property type="entry name" value="Pyruvate_for-lyase_activase"/>
</dbReference>
<dbReference type="InterPro" id="IPR001989">
    <property type="entry name" value="Radical_activat_CS"/>
</dbReference>
<dbReference type="InterPro" id="IPR007197">
    <property type="entry name" value="rSAM"/>
</dbReference>
<dbReference type="NCBIfam" id="TIGR02493">
    <property type="entry name" value="PFLA"/>
    <property type="match status" value="1"/>
</dbReference>
<dbReference type="NCBIfam" id="NF008356">
    <property type="entry name" value="PRK11145.1"/>
    <property type="match status" value="1"/>
</dbReference>
<dbReference type="PANTHER" id="PTHR30352:SF5">
    <property type="entry name" value="PYRUVATE FORMATE-LYASE 1-ACTIVATING ENZYME"/>
    <property type="match status" value="1"/>
</dbReference>
<dbReference type="PANTHER" id="PTHR30352">
    <property type="entry name" value="PYRUVATE FORMATE-LYASE-ACTIVATING ENZYME"/>
    <property type="match status" value="1"/>
</dbReference>
<dbReference type="Pfam" id="PF13353">
    <property type="entry name" value="Fer4_12"/>
    <property type="match status" value="1"/>
</dbReference>
<dbReference type="Pfam" id="PF04055">
    <property type="entry name" value="Radical_SAM"/>
    <property type="match status" value="1"/>
</dbReference>
<dbReference type="PIRSF" id="PIRSF000371">
    <property type="entry name" value="PFL_act_enz"/>
    <property type="match status" value="1"/>
</dbReference>
<dbReference type="SFLD" id="SFLDG01066">
    <property type="entry name" value="organic_radical-activating_enz"/>
    <property type="match status" value="1"/>
</dbReference>
<dbReference type="SFLD" id="SFLDF00278">
    <property type="entry name" value="pyruvate_formate-lyase_activas"/>
    <property type="match status" value="1"/>
</dbReference>
<dbReference type="SUPFAM" id="SSF102114">
    <property type="entry name" value="Radical SAM enzymes"/>
    <property type="match status" value="1"/>
</dbReference>
<dbReference type="PROSITE" id="PS01087">
    <property type="entry name" value="RADICAL_ACTIVATING"/>
    <property type="match status" value="1"/>
</dbReference>
<dbReference type="PROSITE" id="PS51918">
    <property type="entry name" value="RADICAL_SAM"/>
    <property type="match status" value="1"/>
</dbReference>
<comment type="function">
    <text evidence="1">Activation of pyruvate formate-lyase 1 under anaerobic conditions by generation of an organic free radical, using S-adenosylmethionine and reduced flavodoxin as cosubstrates to produce 5'-deoxy-adenosine.</text>
</comment>
<comment type="catalytic activity">
    <reaction>
        <text>glycyl-[formate C-acetyltransferase] + reduced [flavodoxin] + S-adenosyl-L-methionine = glycin-2-yl radical-[formate C-acetyltransferase] + semiquinone [flavodoxin] + 5'-deoxyadenosine + L-methionine + H(+)</text>
        <dbReference type="Rhea" id="RHEA:19225"/>
        <dbReference type="Rhea" id="RHEA-COMP:10622"/>
        <dbReference type="Rhea" id="RHEA-COMP:12190"/>
        <dbReference type="Rhea" id="RHEA-COMP:12191"/>
        <dbReference type="Rhea" id="RHEA-COMP:14480"/>
        <dbReference type="ChEBI" id="CHEBI:15378"/>
        <dbReference type="ChEBI" id="CHEBI:17319"/>
        <dbReference type="ChEBI" id="CHEBI:29947"/>
        <dbReference type="ChEBI" id="CHEBI:32722"/>
        <dbReference type="ChEBI" id="CHEBI:57618"/>
        <dbReference type="ChEBI" id="CHEBI:57844"/>
        <dbReference type="ChEBI" id="CHEBI:59789"/>
        <dbReference type="ChEBI" id="CHEBI:140311"/>
        <dbReference type="EC" id="1.97.1.4"/>
    </reaction>
</comment>
<comment type="cofactor">
    <cofactor evidence="1">
        <name>[4Fe-4S] cluster</name>
        <dbReference type="ChEBI" id="CHEBI:49883"/>
    </cofactor>
    <text evidence="1">Binds 1 [4Fe-4S] cluster. The cluster is coordinated with 3 cysteines and an exchangeable S-adenosyl-L-methionine.</text>
</comment>
<comment type="subcellular location">
    <subcellularLocation>
        <location evidence="1">Cytoplasm</location>
    </subcellularLocation>
</comment>
<comment type="similarity">
    <text evidence="4">Belongs to the organic radical-activating enzymes family.</text>
</comment>
<name>PFLA_SHIFL</name>